<organism>
    <name type="scientific">Rhodococcus opacus (strain B4)</name>
    <dbReference type="NCBI Taxonomy" id="632772"/>
    <lineage>
        <taxon>Bacteria</taxon>
        <taxon>Bacillati</taxon>
        <taxon>Actinomycetota</taxon>
        <taxon>Actinomycetes</taxon>
        <taxon>Mycobacteriales</taxon>
        <taxon>Nocardiaceae</taxon>
        <taxon>Rhodococcus</taxon>
    </lineage>
</organism>
<sequence length="200" mass="20497">MIASVRGEVLEIALDHAVIESAGVGYRVNATPATLGGLQRGTEARLVTAMIVREDSMTLYGFPDSESKELFGLLQTVSGVGPRLAMATLAVLEPEALRSALAEGNVTALTRVPGIGKRGAERMVVELRDKVDAVGSTSGAVPLGAGGGGSVRDQIVEALVGLGFPAKQAEQATDSVLAEAPESTTSSALRSALSLLGKTR</sequence>
<dbReference type="EMBL" id="AP011115">
    <property type="protein sequence ID" value="BAH55119.1"/>
    <property type="molecule type" value="Genomic_DNA"/>
</dbReference>
<dbReference type="RefSeq" id="WP_015890549.1">
    <property type="nucleotide sequence ID" value="NC_012522.1"/>
</dbReference>
<dbReference type="SMR" id="C1B4D0"/>
<dbReference type="STRING" id="632772.ROP_68720"/>
<dbReference type="KEGG" id="rop:ROP_68720"/>
<dbReference type="PATRIC" id="fig|632772.20.peg.7162"/>
<dbReference type="HOGENOM" id="CLU_087936_2_1_11"/>
<dbReference type="OrthoDB" id="5293449at2"/>
<dbReference type="Proteomes" id="UP000002212">
    <property type="component" value="Chromosome"/>
</dbReference>
<dbReference type="GO" id="GO:0005737">
    <property type="term" value="C:cytoplasm"/>
    <property type="evidence" value="ECO:0007669"/>
    <property type="project" value="UniProtKB-SubCell"/>
</dbReference>
<dbReference type="GO" id="GO:0009379">
    <property type="term" value="C:Holliday junction helicase complex"/>
    <property type="evidence" value="ECO:0007669"/>
    <property type="project" value="InterPro"/>
</dbReference>
<dbReference type="GO" id="GO:0048476">
    <property type="term" value="C:Holliday junction resolvase complex"/>
    <property type="evidence" value="ECO:0007669"/>
    <property type="project" value="UniProtKB-UniRule"/>
</dbReference>
<dbReference type="GO" id="GO:0005524">
    <property type="term" value="F:ATP binding"/>
    <property type="evidence" value="ECO:0007669"/>
    <property type="project" value="InterPro"/>
</dbReference>
<dbReference type="GO" id="GO:0000400">
    <property type="term" value="F:four-way junction DNA binding"/>
    <property type="evidence" value="ECO:0007669"/>
    <property type="project" value="UniProtKB-UniRule"/>
</dbReference>
<dbReference type="GO" id="GO:0009378">
    <property type="term" value="F:four-way junction helicase activity"/>
    <property type="evidence" value="ECO:0007669"/>
    <property type="project" value="InterPro"/>
</dbReference>
<dbReference type="GO" id="GO:0006310">
    <property type="term" value="P:DNA recombination"/>
    <property type="evidence" value="ECO:0007669"/>
    <property type="project" value="UniProtKB-UniRule"/>
</dbReference>
<dbReference type="GO" id="GO:0006281">
    <property type="term" value="P:DNA repair"/>
    <property type="evidence" value="ECO:0007669"/>
    <property type="project" value="UniProtKB-UniRule"/>
</dbReference>
<dbReference type="CDD" id="cd14332">
    <property type="entry name" value="UBA_RuvA_C"/>
    <property type="match status" value="1"/>
</dbReference>
<dbReference type="FunFam" id="2.40.50.140:FF:000083">
    <property type="entry name" value="Holliday junction ATP-dependent DNA helicase RuvA"/>
    <property type="match status" value="1"/>
</dbReference>
<dbReference type="Gene3D" id="1.10.150.20">
    <property type="entry name" value="5' to 3' exonuclease, C-terminal subdomain"/>
    <property type="match status" value="1"/>
</dbReference>
<dbReference type="Gene3D" id="1.10.8.10">
    <property type="entry name" value="DNA helicase RuvA subunit, C-terminal domain"/>
    <property type="match status" value="1"/>
</dbReference>
<dbReference type="Gene3D" id="2.40.50.140">
    <property type="entry name" value="Nucleic acid-binding proteins"/>
    <property type="match status" value="1"/>
</dbReference>
<dbReference type="HAMAP" id="MF_00031">
    <property type="entry name" value="DNA_HJ_migration_RuvA"/>
    <property type="match status" value="1"/>
</dbReference>
<dbReference type="InterPro" id="IPR013849">
    <property type="entry name" value="DNA_helicase_Holl-junc_RuvA_I"/>
</dbReference>
<dbReference type="InterPro" id="IPR012340">
    <property type="entry name" value="NA-bd_OB-fold"/>
</dbReference>
<dbReference type="InterPro" id="IPR000085">
    <property type="entry name" value="RuvA"/>
</dbReference>
<dbReference type="InterPro" id="IPR010994">
    <property type="entry name" value="RuvA_2-like"/>
</dbReference>
<dbReference type="InterPro" id="IPR011114">
    <property type="entry name" value="RuvA_C"/>
</dbReference>
<dbReference type="InterPro" id="IPR036267">
    <property type="entry name" value="RuvA_C_sf"/>
</dbReference>
<dbReference type="NCBIfam" id="TIGR00084">
    <property type="entry name" value="ruvA"/>
    <property type="match status" value="1"/>
</dbReference>
<dbReference type="Pfam" id="PF14520">
    <property type="entry name" value="HHH_5"/>
    <property type="match status" value="1"/>
</dbReference>
<dbReference type="Pfam" id="PF07499">
    <property type="entry name" value="RuvA_C"/>
    <property type="match status" value="1"/>
</dbReference>
<dbReference type="Pfam" id="PF01330">
    <property type="entry name" value="RuvA_N"/>
    <property type="match status" value="1"/>
</dbReference>
<dbReference type="SUPFAM" id="SSF46929">
    <property type="entry name" value="DNA helicase RuvA subunit, C-terminal domain"/>
    <property type="match status" value="1"/>
</dbReference>
<dbReference type="SUPFAM" id="SSF50249">
    <property type="entry name" value="Nucleic acid-binding proteins"/>
    <property type="match status" value="1"/>
</dbReference>
<dbReference type="SUPFAM" id="SSF47781">
    <property type="entry name" value="RuvA domain 2-like"/>
    <property type="match status" value="1"/>
</dbReference>
<feature type="chain" id="PRO_1000195173" description="Holliday junction branch migration complex subunit RuvA">
    <location>
        <begin position="1"/>
        <end position="200"/>
    </location>
</feature>
<feature type="region of interest" description="Domain I" evidence="1">
    <location>
        <begin position="1"/>
        <end position="63"/>
    </location>
</feature>
<feature type="region of interest" description="Domain II" evidence="1">
    <location>
        <begin position="64"/>
        <end position="142"/>
    </location>
</feature>
<feature type="region of interest" description="Flexible linker" evidence="1">
    <location>
        <begin position="142"/>
        <end position="146"/>
    </location>
</feature>
<feature type="region of interest" description="Domain III" evidence="1">
    <location>
        <begin position="147"/>
        <end position="200"/>
    </location>
</feature>
<reference key="1">
    <citation type="submission" date="2009-03" db="EMBL/GenBank/DDBJ databases">
        <title>Comparison of the complete genome sequences of Rhodococcus erythropolis PR4 and Rhodococcus opacus B4.</title>
        <authorList>
            <person name="Takarada H."/>
            <person name="Sekine M."/>
            <person name="Hosoyama A."/>
            <person name="Yamada R."/>
            <person name="Fujisawa T."/>
            <person name="Omata S."/>
            <person name="Shimizu A."/>
            <person name="Tsukatani N."/>
            <person name="Tanikawa S."/>
            <person name="Fujita N."/>
            <person name="Harayama S."/>
        </authorList>
    </citation>
    <scope>NUCLEOTIDE SEQUENCE [LARGE SCALE GENOMIC DNA]</scope>
    <source>
        <strain>B4</strain>
    </source>
</reference>
<accession>C1B4D0</accession>
<evidence type="ECO:0000255" key="1">
    <source>
        <dbReference type="HAMAP-Rule" id="MF_00031"/>
    </source>
</evidence>
<gene>
    <name evidence="1" type="primary">ruvA</name>
    <name type="ordered locus">ROP_68720</name>
</gene>
<protein>
    <recommendedName>
        <fullName evidence="1">Holliday junction branch migration complex subunit RuvA</fullName>
    </recommendedName>
</protein>
<proteinExistence type="inferred from homology"/>
<comment type="function">
    <text evidence="1">The RuvA-RuvB-RuvC complex processes Holliday junction (HJ) DNA during genetic recombination and DNA repair, while the RuvA-RuvB complex plays an important role in the rescue of blocked DNA replication forks via replication fork reversal (RFR). RuvA specifically binds to HJ cruciform DNA, conferring on it an open structure. The RuvB hexamer acts as an ATP-dependent pump, pulling dsDNA into and through the RuvAB complex. HJ branch migration allows RuvC to scan DNA until it finds its consensus sequence, where it cleaves and resolves the cruciform DNA.</text>
</comment>
<comment type="subunit">
    <text evidence="1">Homotetramer. Forms an RuvA(8)-RuvB(12)-Holliday junction (HJ) complex. HJ DNA is sandwiched between 2 RuvA tetramers; dsDNA enters through RuvA and exits via RuvB. An RuvB hexamer assembles on each DNA strand where it exits the tetramer. Each RuvB hexamer is contacted by two RuvA subunits (via domain III) on 2 adjacent RuvB subunits; this complex drives branch migration. In the full resolvosome a probable DNA-RuvA(4)-RuvB(12)-RuvC(2) complex forms which resolves the HJ.</text>
</comment>
<comment type="subcellular location">
    <subcellularLocation>
        <location evidence="1">Cytoplasm</location>
    </subcellularLocation>
</comment>
<comment type="domain">
    <text evidence="1">Has three domains with a flexible linker between the domains II and III and assumes an 'L' shape. Domain III is highly mobile and contacts RuvB.</text>
</comment>
<comment type="similarity">
    <text evidence="1">Belongs to the RuvA family.</text>
</comment>
<name>RUVA_RHOOB</name>
<keyword id="KW-0963">Cytoplasm</keyword>
<keyword id="KW-0227">DNA damage</keyword>
<keyword id="KW-0233">DNA recombination</keyword>
<keyword id="KW-0234">DNA repair</keyword>
<keyword id="KW-0238">DNA-binding</keyword>